<gene>
    <name evidence="1" type="primary">guaA</name>
    <name type="ordered locus">MLBr00395</name>
</gene>
<accession>B8ZUE2</accession>
<evidence type="ECO:0000255" key="1">
    <source>
        <dbReference type="HAMAP-Rule" id="MF_00344"/>
    </source>
</evidence>
<name>GUAA_MYCLB</name>
<feature type="chain" id="PRO_1000190248" description="GMP synthase [glutamine-hydrolyzing]">
    <location>
        <begin position="1"/>
        <end position="529"/>
    </location>
</feature>
<feature type="domain" description="Glutamine amidotransferase type-1" evidence="1">
    <location>
        <begin position="16"/>
        <end position="205"/>
    </location>
</feature>
<feature type="domain" description="GMPS ATP-PPase" evidence="1">
    <location>
        <begin position="206"/>
        <end position="403"/>
    </location>
</feature>
<feature type="active site" description="Nucleophile" evidence="1">
    <location>
        <position position="93"/>
    </location>
</feature>
<feature type="active site" evidence="1">
    <location>
        <position position="179"/>
    </location>
</feature>
<feature type="active site" evidence="1">
    <location>
        <position position="181"/>
    </location>
</feature>
<feature type="binding site" evidence="1">
    <location>
        <begin position="233"/>
        <end position="239"/>
    </location>
    <ligand>
        <name>ATP</name>
        <dbReference type="ChEBI" id="CHEBI:30616"/>
    </ligand>
</feature>
<proteinExistence type="inferred from homology"/>
<protein>
    <recommendedName>
        <fullName evidence="1">GMP synthase [glutamine-hydrolyzing]</fullName>
        <ecNumber evidence="1">6.3.5.2</ecNumber>
    </recommendedName>
    <alternativeName>
        <fullName evidence="1">GMP synthetase</fullName>
    </alternativeName>
    <alternativeName>
        <fullName evidence="1">Glutamine amidotransferase</fullName>
    </alternativeName>
</protein>
<keyword id="KW-0067">ATP-binding</keyword>
<keyword id="KW-0315">Glutamine amidotransferase</keyword>
<keyword id="KW-0332">GMP biosynthesis</keyword>
<keyword id="KW-0436">Ligase</keyword>
<keyword id="KW-0547">Nucleotide-binding</keyword>
<keyword id="KW-0658">Purine biosynthesis</keyword>
<reference key="1">
    <citation type="journal article" date="2009" name="Nat. Genet.">
        <title>Comparative genomic and phylogeographic analysis of Mycobacterium leprae.</title>
        <authorList>
            <person name="Monot M."/>
            <person name="Honore N."/>
            <person name="Garnier T."/>
            <person name="Zidane N."/>
            <person name="Sherafi D."/>
            <person name="Paniz-Mondolfi A."/>
            <person name="Matsuoka M."/>
            <person name="Taylor G.M."/>
            <person name="Donoghue H.D."/>
            <person name="Bouwman A."/>
            <person name="Mays S."/>
            <person name="Watson C."/>
            <person name="Lockwood D."/>
            <person name="Khamispour A."/>
            <person name="Dowlati Y."/>
            <person name="Jianping S."/>
            <person name="Rea T.H."/>
            <person name="Vera-Cabrera L."/>
            <person name="Stefani M.M."/>
            <person name="Banu S."/>
            <person name="Macdonald M."/>
            <person name="Sapkota B.R."/>
            <person name="Spencer J.S."/>
            <person name="Thomas J."/>
            <person name="Harshman K."/>
            <person name="Singh P."/>
            <person name="Busso P."/>
            <person name="Gattiker A."/>
            <person name="Rougemont J."/>
            <person name="Brennan P.J."/>
            <person name="Cole S.T."/>
        </authorList>
    </citation>
    <scope>NUCLEOTIDE SEQUENCE [LARGE SCALE GENOMIC DNA]</scope>
    <source>
        <strain>Br4923</strain>
    </source>
</reference>
<comment type="function">
    <text evidence="1">Catalyzes the synthesis of GMP from XMP.</text>
</comment>
<comment type="catalytic activity">
    <reaction evidence="1">
        <text>XMP + L-glutamine + ATP + H2O = GMP + L-glutamate + AMP + diphosphate + 2 H(+)</text>
        <dbReference type="Rhea" id="RHEA:11680"/>
        <dbReference type="ChEBI" id="CHEBI:15377"/>
        <dbReference type="ChEBI" id="CHEBI:15378"/>
        <dbReference type="ChEBI" id="CHEBI:29985"/>
        <dbReference type="ChEBI" id="CHEBI:30616"/>
        <dbReference type="ChEBI" id="CHEBI:33019"/>
        <dbReference type="ChEBI" id="CHEBI:57464"/>
        <dbReference type="ChEBI" id="CHEBI:58115"/>
        <dbReference type="ChEBI" id="CHEBI:58359"/>
        <dbReference type="ChEBI" id="CHEBI:456215"/>
        <dbReference type="EC" id="6.3.5.2"/>
    </reaction>
</comment>
<comment type="pathway">
    <text evidence="1">Purine metabolism; GMP biosynthesis; GMP from XMP (L-Gln route): step 1/1.</text>
</comment>
<comment type="subunit">
    <text evidence="1">Homodimer.</text>
</comment>
<organism>
    <name type="scientific">Mycobacterium leprae (strain Br4923)</name>
    <dbReference type="NCBI Taxonomy" id="561304"/>
    <lineage>
        <taxon>Bacteria</taxon>
        <taxon>Bacillati</taxon>
        <taxon>Actinomycetota</taxon>
        <taxon>Actinomycetes</taxon>
        <taxon>Mycobacteriales</taxon>
        <taxon>Mycobacteriaceae</taxon>
        <taxon>Mycobacterium</taxon>
    </lineage>
</organism>
<dbReference type="EC" id="6.3.5.2" evidence="1"/>
<dbReference type="EMBL" id="FM211192">
    <property type="protein sequence ID" value="CAR70488.1"/>
    <property type="molecule type" value="Genomic_DNA"/>
</dbReference>
<dbReference type="SMR" id="B8ZUE2"/>
<dbReference type="MEROPS" id="C26.A07"/>
<dbReference type="KEGG" id="mlb:MLBr00395"/>
<dbReference type="HOGENOM" id="CLU_014340_0_5_11"/>
<dbReference type="UniPathway" id="UPA00189">
    <property type="reaction ID" value="UER00296"/>
</dbReference>
<dbReference type="Proteomes" id="UP000006900">
    <property type="component" value="Chromosome"/>
</dbReference>
<dbReference type="GO" id="GO:0005829">
    <property type="term" value="C:cytosol"/>
    <property type="evidence" value="ECO:0007669"/>
    <property type="project" value="TreeGrafter"/>
</dbReference>
<dbReference type="GO" id="GO:0005524">
    <property type="term" value="F:ATP binding"/>
    <property type="evidence" value="ECO:0007669"/>
    <property type="project" value="UniProtKB-UniRule"/>
</dbReference>
<dbReference type="GO" id="GO:0003921">
    <property type="term" value="F:GMP synthase activity"/>
    <property type="evidence" value="ECO:0007669"/>
    <property type="project" value="InterPro"/>
</dbReference>
<dbReference type="CDD" id="cd01742">
    <property type="entry name" value="GATase1_GMP_Synthase"/>
    <property type="match status" value="1"/>
</dbReference>
<dbReference type="CDD" id="cd01997">
    <property type="entry name" value="GMP_synthase_C"/>
    <property type="match status" value="1"/>
</dbReference>
<dbReference type="FunFam" id="3.30.300.10:FF:000002">
    <property type="entry name" value="GMP synthase [glutamine-hydrolyzing]"/>
    <property type="match status" value="1"/>
</dbReference>
<dbReference type="FunFam" id="3.40.50.620:FF:000001">
    <property type="entry name" value="GMP synthase [glutamine-hydrolyzing]"/>
    <property type="match status" value="1"/>
</dbReference>
<dbReference type="FunFam" id="3.40.50.880:FF:000001">
    <property type="entry name" value="GMP synthase [glutamine-hydrolyzing]"/>
    <property type="match status" value="1"/>
</dbReference>
<dbReference type="Gene3D" id="3.30.300.10">
    <property type="match status" value="1"/>
</dbReference>
<dbReference type="Gene3D" id="3.40.50.880">
    <property type="match status" value="1"/>
</dbReference>
<dbReference type="Gene3D" id="3.40.50.620">
    <property type="entry name" value="HUPs"/>
    <property type="match status" value="1"/>
</dbReference>
<dbReference type="HAMAP" id="MF_00344">
    <property type="entry name" value="GMP_synthase"/>
    <property type="match status" value="1"/>
</dbReference>
<dbReference type="InterPro" id="IPR029062">
    <property type="entry name" value="Class_I_gatase-like"/>
</dbReference>
<dbReference type="InterPro" id="IPR017926">
    <property type="entry name" value="GATASE"/>
</dbReference>
<dbReference type="InterPro" id="IPR001674">
    <property type="entry name" value="GMP_synth_C"/>
</dbReference>
<dbReference type="InterPro" id="IPR004739">
    <property type="entry name" value="GMP_synth_GATase"/>
</dbReference>
<dbReference type="InterPro" id="IPR022955">
    <property type="entry name" value="GMP_synthase"/>
</dbReference>
<dbReference type="InterPro" id="IPR025777">
    <property type="entry name" value="GMPS_ATP_PPase_dom"/>
</dbReference>
<dbReference type="InterPro" id="IPR022310">
    <property type="entry name" value="NAD/GMP_synthase"/>
</dbReference>
<dbReference type="InterPro" id="IPR014729">
    <property type="entry name" value="Rossmann-like_a/b/a_fold"/>
</dbReference>
<dbReference type="NCBIfam" id="TIGR00884">
    <property type="entry name" value="guaA_Cterm"/>
    <property type="match status" value="1"/>
</dbReference>
<dbReference type="NCBIfam" id="TIGR00888">
    <property type="entry name" value="guaA_Nterm"/>
    <property type="match status" value="1"/>
</dbReference>
<dbReference type="NCBIfam" id="NF000848">
    <property type="entry name" value="PRK00074.1"/>
    <property type="match status" value="1"/>
</dbReference>
<dbReference type="PANTHER" id="PTHR11922:SF2">
    <property type="entry name" value="GMP SYNTHASE [GLUTAMINE-HYDROLYZING]"/>
    <property type="match status" value="1"/>
</dbReference>
<dbReference type="PANTHER" id="PTHR11922">
    <property type="entry name" value="GMP SYNTHASE-RELATED"/>
    <property type="match status" value="1"/>
</dbReference>
<dbReference type="Pfam" id="PF00117">
    <property type="entry name" value="GATase"/>
    <property type="match status" value="1"/>
</dbReference>
<dbReference type="Pfam" id="PF00958">
    <property type="entry name" value="GMP_synt_C"/>
    <property type="match status" value="1"/>
</dbReference>
<dbReference type="Pfam" id="PF02540">
    <property type="entry name" value="NAD_synthase"/>
    <property type="match status" value="1"/>
</dbReference>
<dbReference type="PRINTS" id="PR00097">
    <property type="entry name" value="ANTSNTHASEII"/>
</dbReference>
<dbReference type="PRINTS" id="PR00099">
    <property type="entry name" value="CPSGATASE"/>
</dbReference>
<dbReference type="PRINTS" id="PR00096">
    <property type="entry name" value="GATASE"/>
</dbReference>
<dbReference type="SUPFAM" id="SSF52402">
    <property type="entry name" value="Adenine nucleotide alpha hydrolases-like"/>
    <property type="match status" value="1"/>
</dbReference>
<dbReference type="SUPFAM" id="SSF52317">
    <property type="entry name" value="Class I glutamine amidotransferase-like"/>
    <property type="match status" value="1"/>
</dbReference>
<dbReference type="SUPFAM" id="SSF54810">
    <property type="entry name" value="GMP synthetase C-terminal dimerisation domain"/>
    <property type="match status" value="1"/>
</dbReference>
<dbReference type="PROSITE" id="PS51273">
    <property type="entry name" value="GATASE_TYPE_1"/>
    <property type="match status" value="1"/>
</dbReference>
<dbReference type="PROSITE" id="PS51553">
    <property type="entry name" value="GMPS_ATP_PPASE"/>
    <property type="match status" value="1"/>
</dbReference>
<sequence>MADSAGLDQPEPSPRPVLVVDFGAQYAQLIARRVREARVFSEVIPHTTSIEEITARDPLAIVLSGGPASVYTEGAPQLDPALFDLGLPVFGICYGFQAMAQVLGGTVARTKTSEYGRTELKVLGGDLHSGLPGVQPVWMSHGDAVTAAPDGFDVAASSSGAPVAAFENRDRRLAGVQYHPEVMHTPHGQQVLSRFLHDFAGLDADWTAANIAGVLVEQVRAQIGNGHAICGLSGGVDSAVAAALVQRAIGDRLTCIFVDHGLLRDGERGQVQRDFVAATGAKLVTVDAAETFLQALSGVTNPEGKRKIIGRQFIRAFEGAVRDLLGDSTFDSGIEFLVQGTLYPDVVESGGGSGTANIKSHHNVGGLPDNLRFKLVEPLRLLFKDEVRAVGRQLDLPEEIVARQPFPGPGLGIRIVGEVTAERLDTLRRADSIAREELTTAGLDYQIWQCPVVLLADVRSVGVQGDNRSYGHPIVLRPVSSEDAMTADWTWVPYEVLECISTRITNEVAEVNRVVLDITNKPPGTIEWE</sequence>